<name>MTC2_HERAU</name>
<organism>
    <name type="scientific">Herpetosiphon aurantiacus</name>
    <name type="common">Herpetosiphon giganteus</name>
    <dbReference type="NCBI Taxonomy" id="65"/>
    <lineage>
        <taxon>Bacteria</taxon>
        <taxon>Bacillati</taxon>
        <taxon>Chloroflexota</taxon>
        <taxon>Chloroflexia</taxon>
        <taxon>Herpetosiphonales</taxon>
        <taxon>Herpetosiphonaceae</taxon>
        <taxon>Herpetosiphon</taxon>
    </lineage>
</organism>
<dbReference type="EC" id="2.1.1.37"/>
<dbReference type="EMBL" id="X55139">
    <property type="protein sequence ID" value="CAA38935.1"/>
    <property type="molecule type" value="Genomic_DNA"/>
</dbReference>
<dbReference type="PIR" id="JC1165">
    <property type="entry name" value="JC1165"/>
</dbReference>
<dbReference type="SMR" id="P25264"/>
<dbReference type="REBASE" id="3416">
    <property type="entry name" value="M.HgiCII"/>
</dbReference>
<dbReference type="PRO" id="PR:P25264"/>
<dbReference type="GO" id="GO:0003886">
    <property type="term" value="F:DNA (cytosine-5-)-methyltransferase activity"/>
    <property type="evidence" value="ECO:0007669"/>
    <property type="project" value="UniProtKB-EC"/>
</dbReference>
<dbReference type="GO" id="GO:0003677">
    <property type="term" value="F:DNA binding"/>
    <property type="evidence" value="ECO:0007669"/>
    <property type="project" value="UniProtKB-KW"/>
</dbReference>
<dbReference type="GO" id="GO:0009307">
    <property type="term" value="P:DNA restriction-modification system"/>
    <property type="evidence" value="ECO:0007669"/>
    <property type="project" value="UniProtKB-KW"/>
</dbReference>
<dbReference type="GO" id="GO:0032259">
    <property type="term" value="P:methylation"/>
    <property type="evidence" value="ECO:0007669"/>
    <property type="project" value="UniProtKB-KW"/>
</dbReference>
<dbReference type="GO" id="GO:0044027">
    <property type="term" value="P:negative regulation of gene expression via chromosomal CpG island methylation"/>
    <property type="evidence" value="ECO:0007669"/>
    <property type="project" value="TreeGrafter"/>
</dbReference>
<dbReference type="CDD" id="cd00315">
    <property type="entry name" value="Cyt_C5_DNA_methylase"/>
    <property type="match status" value="1"/>
</dbReference>
<dbReference type="Gene3D" id="3.90.120.10">
    <property type="entry name" value="DNA Methylase, subunit A, domain 2"/>
    <property type="match status" value="1"/>
</dbReference>
<dbReference type="Gene3D" id="3.40.50.150">
    <property type="entry name" value="Vaccinia Virus protein VP39"/>
    <property type="match status" value="1"/>
</dbReference>
<dbReference type="InterPro" id="IPR050390">
    <property type="entry name" value="C5-Methyltransferase"/>
</dbReference>
<dbReference type="InterPro" id="IPR018117">
    <property type="entry name" value="C5_DNA_meth_AS"/>
</dbReference>
<dbReference type="InterPro" id="IPR001525">
    <property type="entry name" value="C5_MeTfrase"/>
</dbReference>
<dbReference type="InterPro" id="IPR031303">
    <property type="entry name" value="C5_meth_CS"/>
</dbReference>
<dbReference type="InterPro" id="IPR029063">
    <property type="entry name" value="SAM-dependent_MTases_sf"/>
</dbReference>
<dbReference type="NCBIfam" id="TIGR00675">
    <property type="entry name" value="dcm"/>
    <property type="match status" value="1"/>
</dbReference>
<dbReference type="PANTHER" id="PTHR10629">
    <property type="entry name" value="CYTOSINE-SPECIFIC METHYLTRANSFERASE"/>
    <property type="match status" value="1"/>
</dbReference>
<dbReference type="PANTHER" id="PTHR10629:SF52">
    <property type="entry name" value="DNA (CYTOSINE-5)-METHYLTRANSFERASE 1"/>
    <property type="match status" value="1"/>
</dbReference>
<dbReference type="Pfam" id="PF00145">
    <property type="entry name" value="DNA_methylase"/>
    <property type="match status" value="1"/>
</dbReference>
<dbReference type="PRINTS" id="PR00105">
    <property type="entry name" value="C5METTRFRASE"/>
</dbReference>
<dbReference type="SUPFAM" id="SSF53335">
    <property type="entry name" value="S-adenosyl-L-methionine-dependent methyltransferases"/>
    <property type="match status" value="1"/>
</dbReference>
<dbReference type="PROSITE" id="PS00094">
    <property type="entry name" value="C5_MTASE_1"/>
    <property type="match status" value="1"/>
</dbReference>
<dbReference type="PROSITE" id="PS00095">
    <property type="entry name" value="C5_MTASE_2"/>
    <property type="match status" value="1"/>
</dbReference>
<dbReference type="PROSITE" id="PS51679">
    <property type="entry name" value="SAM_MT_C5"/>
    <property type="match status" value="1"/>
</dbReference>
<reference key="1">
    <citation type="journal article" date="1992" name="Gene">
        <title>Stepwise cloning and genetic organization of the seemingly unclonable HgiCII restriction-modification system from Herpetosiphon giganteus strain Hpg9, using PCR technique.</title>
        <authorList>
            <person name="Erdmann D."/>
            <person name="Horst G."/>
            <person name="Duesterhoeft A."/>
            <person name="Kroeger M."/>
        </authorList>
    </citation>
    <scope>NUCLEOTIDE SEQUENCE [GENOMIC DNA]</scope>
    <scope>FUNCTION</scope>
    <source>
        <strain>HPG9</strain>
    </source>
</reference>
<reference key="2">
    <citation type="journal article" date="1995" name="Gene">
        <title>Organization and gene expression within restriction-modification systems of Herpetosiphon giganteus.</title>
        <authorList>
            <person name="Kroeger M."/>
            <person name="Blum E."/>
            <person name="Deppe E."/>
            <person name="Duesterhoeft A."/>
            <person name="Erdmann D."/>
            <person name="Kilz S."/>
            <person name="Meyer-Rogge S."/>
            <person name="Moestl D."/>
        </authorList>
    </citation>
    <scope>DISCUSSION OF SEQUENCE</scope>
</reference>
<reference key="3">
    <citation type="journal article" date="2003" name="Nucleic Acids Res.">
        <title>A nomenclature for restriction enzymes, DNA methyltransferases, homing endonucleases and their genes.</title>
        <authorList>
            <person name="Roberts R.J."/>
            <person name="Belfort M."/>
            <person name="Bestor T."/>
            <person name="Bhagwat A.S."/>
            <person name="Bickle T.A."/>
            <person name="Bitinaite J."/>
            <person name="Blumenthal R.M."/>
            <person name="Degtyarev S.K."/>
            <person name="Dryden D.T."/>
            <person name="Dybvig K."/>
            <person name="Firman K."/>
            <person name="Gromova E.S."/>
            <person name="Gumport R.I."/>
            <person name="Halford S.E."/>
            <person name="Hattman S."/>
            <person name="Heitman J."/>
            <person name="Hornby D.P."/>
            <person name="Janulaitis A."/>
            <person name="Jeltsch A."/>
            <person name="Josephsen J."/>
            <person name="Kiss A."/>
            <person name="Klaenhammer T.R."/>
            <person name="Kobayashi I."/>
            <person name="Kong H."/>
            <person name="Krueger D.H."/>
            <person name="Lacks S."/>
            <person name="Marinus M.G."/>
            <person name="Miyahara M."/>
            <person name="Morgan R.D."/>
            <person name="Murray N.E."/>
            <person name="Nagaraja V."/>
            <person name="Piekarowicz A."/>
            <person name="Pingoud A."/>
            <person name="Raleigh E."/>
            <person name="Rao D.N."/>
            <person name="Reich N."/>
            <person name="Repin V.E."/>
            <person name="Selker E.U."/>
            <person name="Shaw P.C."/>
            <person name="Stein D.C."/>
            <person name="Stoddard B.L."/>
            <person name="Szybalski W."/>
            <person name="Trautner T.A."/>
            <person name="Van Etten J.L."/>
            <person name="Vitor J.M."/>
            <person name="Wilson G.G."/>
            <person name="Xu S.Y."/>
        </authorList>
    </citation>
    <scope>NOMENCLATURE</scope>
</reference>
<protein>
    <recommendedName>
        <fullName evidence="3">Type II methyltransferase M.HgiCII</fullName>
        <shortName evidence="4">M.HgiCII</shortName>
        <ecNumber>2.1.1.37</ecNumber>
    </recommendedName>
    <alternativeName>
        <fullName>Cytosine-specific methyltransferase HgiCII</fullName>
    </alternativeName>
    <alternativeName>
        <fullName>Modification methylase HgiCII</fullName>
    </alternativeName>
</protein>
<accession>P25264</accession>
<sequence>MKQFRFIDLFAGIGGFRLGLEAVGGICVGSAEIDQQAIKVYRQNWPTDRSEHNLGDITTLQQLPAHDLVVGGVPCQPWSIAGKNQAFDDPRGQLWADVIRLVRINQPKAFIFENVKGLIDPRNRLCLESILDSFKAEGYNVYYKLLNSFDYGVAQNRDRVFIIGIQQKLGVPDFSFPEYSESEQRLYDILDNLQTPSIIPESLPIQRNLFGERIEVGFNKLTPRGAFNDFFILNDIRNGPTSIHSWEIYATTEREKQICTTIMRNRGNPRYGDCDGNPMSYQDIADLVVDLAESELQVLIQKRILRQYEDGKYEFFNRRLSGGIDGTYRIFLPHARFFGRLTARGMHDEIAEISVSGATAEAYKQNFIQQILIPKRHRPITVNEAARIQGFPATFKFHSNQSANFRLIGNSVAPPVIMALGKALPNDHLFEPELCEV</sequence>
<keyword id="KW-0238">DNA-binding</keyword>
<keyword id="KW-0489">Methyltransferase</keyword>
<keyword id="KW-0680">Restriction system</keyword>
<keyword id="KW-0949">S-adenosyl-L-methionine</keyword>
<keyword id="KW-0808">Transferase</keyword>
<evidence type="ECO:0000255" key="1">
    <source>
        <dbReference type="PROSITE-ProRule" id="PRU01016"/>
    </source>
</evidence>
<evidence type="ECO:0000255" key="2">
    <source>
        <dbReference type="PROSITE-ProRule" id="PRU10018"/>
    </source>
</evidence>
<evidence type="ECO:0000303" key="3">
    <source>
    </source>
</evidence>
<evidence type="ECO:0000303" key="4">
    <source>
    </source>
</evidence>
<evidence type="ECO:0000305" key="5">
    <source>
    </source>
</evidence>
<comment type="function">
    <text evidence="3 5">A methylase that recognizes the double-stranded sequence 5'-GGWCC-3', methylates C-? on both strands and protects the DNA from cleavage by the HgiCII endonuclease.</text>
</comment>
<comment type="catalytic activity">
    <reaction evidence="2">
        <text>a 2'-deoxycytidine in DNA + S-adenosyl-L-methionine = a 5-methyl-2'-deoxycytidine in DNA + S-adenosyl-L-homocysteine + H(+)</text>
        <dbReference type="Rhea" id="RHEA:13681"/>
        <dbReference type="Rhea" id="RHEA-COMP:11369"/>
        <dbReference type="Rhea" id="RHEA-COMP:11370"/>
        <dbReference type="ChEBI" id="CHEBI:15378"/>
        <dbReference type="ChEBI" id="CHEBI:57856"/>
        <dbReference type="ChEBI" id="CHEBI:59789"/>
        <dbReference type="ChEBI" id="CHEBI:85452"/>
        <dbReference type="ChEBI" id="CHEBI:85454"/>
        <dbReference type="EC" id="2.1.1.37"/>
    </reaction>
</comment>
<comment type="similarity">
    <text evidence="1">Belongs to the class I-like SAM-binding methyltransferase superfamily. C5-methyltransferase family.</text>
</comment>
<proteinExistence type="inferred from homology"/>
<gene>
    <name evidence="4" type="primary">hgiCIIM</name>
</gene>
<feature type="chain" id="PRO_0000087887" description="Type II methyltransferase M.HgiCII">
    <location>
        <begin position="1"/>
        <end position="437"/>
    </location>
</feature>
<feature type="domain" description="SAM-dependent MTase C5-type" evidence="1">
    <location>
        <begin position="4"/>
        <end position="431"/>
    </location>
</feature>
<feature type="active site" evidence="1 2">
    <location>
        <position position="75"/>
    </location>
</feature>